<protein>
    <recommendedName>
        <fullName evidence="1">p-hydroxybenzoic acid efflux pump subunit AaeA</fullName>
        <shortName evidence="1">pHBA efflux pump protein A</shortName>
    </recommendedName>
</protein>
<feature type="chain" id="PRO_1000146726" description="p-hydroxybenzoic acid efflux pump subunit AaeA">
    <location>
        <begin position="1"/>
        <end position="310"/>
    </location>
</feature>
<feature type="transmembrane region" description="Helical" evidence="1">
    <location>
        <begin position="12"/>
        <end position="32"/>
    </location>
</feature>
<sequence length="310" mass="34545">MKTLTRKLSRTAITLVLVILAFIAIFRAWVYYTESPWTRDARFSADVVAIAPDVAGLITHVNVHDNQLVKKDQVLFTIDQPRYQKALAEAEADVAYYQVLAQEKRQEAGRRNRLGVQAMSREEIDQANNVLQTVLHQLAKAQATRDLAKLDLERTVIRAPADGWVTNLNVYAGEFITRGSTAVALVKKNSFYVQAYMEETKLEGVRPGYRAEITPLGSNRVLKGTVDSVAAGVTNASSTSDAKGMATIDSNLEWVRLAQRVPVRIRLDEQQGNLWPAGTTATVVITGKQDRDASQDSFFRKLAHRLREFG</sequence>
<reference key="1">
    <citation type="journal article" date="2011" name="J. Bacteriol.">
        <title>Comparative genomics of 28 Salmonella enterica isolates: evidence for CRISPR-mediated adaptive sublineage evolution.</title>
        <authorList>
            <person name="Fricke W.F."/>
            <person name="Mammel M.K."/>
            <person name="McDermott P.F."/>
            <person name="Tartera C."/>
            <person name="White D.G."/>
            <person name="Leclerc J.E."/>
            <person name="Ravel J."/>
            <person name="Cebula T.A."/>
        </authorList>
    </citation>
    <scope>NUCLEOTIDE SEQUENCE [LARGE SCALE GENOMIC DNA]</scope>
    <source>
        <strain>SL476</strain>
    </source>
</reference>
<organism>
    <name type="scientific">Salmonella heidelberg (strain SL476)</name>
    <dbReference type="NCBI Taxonomy" id="454169"/>
    <lineage>
        <taxon>Bacteria</taxon>
        <taxon>Pseudomonadati</taxon>
        <taxon>Pseudomonadota</taxon>
        <taxon>Gammaproteobacteria</taxon>
        <taxon>Enterobacterales</taxon>
        <taxon>Enterobacteriaceae</taxon>
        <taxon>Salmonella</taxon>
    </lineage>
</organism>
<dbReference type="EMBL" id="CP001120">
    <property type="protein sequence ID" value="ACF66851.1"/>
    <property type="molecule type" value="Genomic_DNA"/>
</dbReference>
<dbReference type="RefSeq" id="WP_000855134.1">
    <property type="nucleotide sequence ID" value="NC_011083.1"/>
</dbReference>
<dbReference type="SMR" id="B4TJT9"/>
<dbReference type="KEGG" id="seh:SeHA_C3663"/>
<dbReference type="HOGENOM" id="CLU_018816_15_2_6"/>
<dbReference type="Proteomes" id="UP000001866">
    <property type="component" value="Chromosome"/>
</dbReference>
<dbReference type="GO" id="GO:0005886">
    <property type="term" value="C:plasma membrane"/>
    <property type="evidence" value="ECO:0007669"/>
    <property type="project" value="UniProtKB-SubCell"/>
</dbReference>
<dbReference type="GO" id="GO:0022857">
    <property type="term" value="F:transmembrane transporter activity"/>
    <property type="evidence" value="ECO:0007669"/>
    <property type="project" value="UniProtKB-UniRule"/>
</dbReference>
<dbReference type="FunFam" id="2.40.30.170:FF:000002">
    <property type="entry name" value="p-hydroxybenzoic acid efflux pump subunit AaeA"/>
    <property type="match status" value="1"/>
</dbReference>
<dbReference type="FunFam" id="2.40.50.100:FF:000018">
    <property type="entry name" value="p-hydroxybenzoic acid efflux pump subunit AaeA"/>
    <property type="match status" value="1"/>
</dbReference>
<dbReference type="Gene3D" id="2.40.30.170">
    <property type="match status" value="1"/>
</dbReference>
<dbReference type="Gene3D" id="2.40.50.100">
    <property type="match status" value="1"/>
</dbReference>
<dbReference type="HAMAP" id="MF_01544">
    <property type="entry name" value="AaeA"/>
    <property type="match status" value="1"/>
</dbReference>
<dbReference type="InterPro" id="IPR043602">
    <property type="entry name" value="CusB-like_dom_1"/>
</dbReference>
<dbReference type="InterPro" id="IPR032317">
    <property type="entry name" value="CusB_D23"/>
</dbReference>
<dbReference type="InterPro" id="IPR050393">
    <property type="entry name" value="MFP_Efflux_Pump"/>
</dbReference>
<dbReference type="InterPro" id="IPR022871">
    <property type="entry name" value="PHBA_efflux_pump_AaeA"/>
</dbReference>
<dbReference type="InterPro" id="IPR006143">
    <property type="entry name" value="RND_pump_MFP"/>
</dbReference>
<dbReference type="NCBIfam" id="NF007850">
    <property type="entry name" value="PRK10559.1"/>
    <property type="match status" value="1"/>
</dbReference>
<dbReference type="NCBIfam" id="TIGR01730">
    <property type="entry name" value="RND_mfp"/>
    <property type="match status" value="1"/>
</dbReference>
<dbReference type="PANTHER" id="PTHR30367:SF12">
    <property type="entry name" value="P-HYDROXYBENZOIC ACID EFFLUX PUMP SUBUNIT AAEA"/>
    <property type="match status" value="1"/>
</dbReference>
<dbReference type="PANTHER" id="PTHR30367">
    <property type="entry name" value="P-HYDROXYBENZOIC ACID EFFLUX PUMP SUBUNIT AAEA-RELATED"/>
    <property type="match status" value="1"/>
</dbReference>
<dbReference type="Pfam" id="PF00529">
    <property type="entry name" value="CusB_dom_1"/>
    <property type="match status" value="1"/>
</dbReference>
<dbReference type="Pfam" id="PF16576">
    <property type="entry name" value="HlyD_D23"/>
    <property type="match status" value="1"/>
</dbReference>
<dbReference type="SUPFAM" id="SSF111369">
    <property type="entry name" value="HlyD-like secretion proteins"/>
    <property type="match status" value="1"/>
</dbReference>
<keyword id="KW-0997">Cell inner membrane</keyword>
<keyword id="KW-1003">Cell membrane</keyword>
<keyword id="KW-0472">Membrane</keyword>
<keyword id="KW-0812">Transmembrane</keyword>
<keyword id="KW-1133">Transmembrane helix</keyword>
<keyword id="KW-0813">Transport</keyword>
<evidence type="ECO:0000255" key="1">
    <source>
        <dbReference type="HAMAP-Rule" id="MF_01544"/>
    </source>
</evidence>
<proteinExistence type="inferred from homology"/>
<accession>B4TJT9</accession>
<comment type="function">
    <text evidence="1">Forms an efflux pump with AaeB.</text>
</comment>
<comment type="subcellular location">
    <subcellularLocation>
        <location evidence="1">Cell inner membrane</location>
        <topology evidence="1">Single-pass membrane protein</topology>
    </subcellularLocation>
</comment>
<comment type="similarity">
    <text evidence="1">Belongs to the membrane fusion protein (MFP) (TC 8.A.1) family.</text>
</comment>
<gene>
    <name evidence="1" type="primary">aaeA</name>
    <name type="ordered locus">SeHA_C3663</name>
</gene>
<name>AAEA_SALHS</name>